<organism>
    <name type="scientific">Mus musculus</name>
    <name type="common">Mouse</name>
    <dbReference type="NCBI Taxonomy" id="10090"/>
    <lineage>
        <taxon>Eukaryota</taxon>
        <taxon>Metazoa</taxon>
        <taxon>Chordata</taxon>
        <taxon>Craniata</taxon>
        <taxon>Vertebrata</taxon>
        <taxon>Euteleostomi</taxon>
        <taxon>Mammalia</taxon>
        <taxon>Eutheria</taxon>
        <taxon>Euarchontoglires</taxon>
        <taxon>Glires</taxon>
        <taxon>Rodentia</taxon>
        <taxon>Myomorpha</taxon>
        <taxon>Muroidea</taxon>
        <taxon>Muridae</taxon>
        <taxon>Murinae</taxon>
        <taxon>Mus</taxon>
        <taxon>Mus</taxon>
    </lineage>
</organism>
<sequence length="255" mass="27686">MAQEKMDLDFEADTSEGATLRRSNSAPLIHVLSDLSQVFEPYPLRTGRTSTAIMSHHSLEEGLDMMNRETTNEREAQAGMQISQSWDESLSLSDSDFDKPEKLYSPKRIDFTPVSPAPSPTRGFGKQCLSPSLQMFVSSSGMPPSPVLNPRHFSRRSQSPVKCIRPSVLGPLKRKGEMEMESQPKRPFQGTTSMLSTNPAQLSDFSSCSDILDGSSISSGLSSDSLATGSAPAESPVACSNSCSPFILMDDLSPK</sequence>
<gene>
    <name evidence="1" type="primary">Pabir2</name>
    <name evidence="5" type="synonym">Fam122b</name>
</gene>
<feature type="initiator methionine" description="Removed" evidence="1">
    <location>
        <position position="1"/>
    </location>
</feature>
<feature type="chain" id="PRO_0000254546" description="PABIR family member 2">
    <location>
        <begin position="2"/>
        <end position="255"/>
    </location>
</feature>
<feature type="region of interest" description="Disordered" evidence="2">
    <location>
        <begin position="1"/>
        <end position="24"/>
    </location>
</feature>
<feature type="region of interest" description="Disordered" evidence="2">
    <location>
        <begin position="169"/>
        <end position="196"/>
    </location>
</feature>
<feature type="region of interest" description="Disordered" evidence="2">
    <location>
        <begin position="219"/>
        <end position="238"/>
    </location>
</feature>
<feature type="compositionally biased region" description="Basic and acidic residues" evidence="2">
    <location>
        <begin position="174"/>
        <end position="184"/>
    </location>
</feature>
<feature type="modified residue" description="N-acetylalanine" evidence="1">
    <location>
        <position position="2"/>
    </location>
</feature>
<feature type="modified residue" description="Phosphoserine" evidence="1">
    <location>
        <position position="25"/>
    </location>
</feature>
<feature type="modified residue" description="Phosphoserine" evidence="1">
    <location>
        <position position="33"/>
    </location>
</feature>
<feature type="modified residue" description="Phosphoserine" evidence="1">
    <location>
        <position position="50"/>
    </location>
</feature>
<feature type="modified residue" description="Phosphoserine" evidence="7">
    <location>
        <position position="58"/>
    </location>
</feature>
<feature type="modified residue" description="Phosphothreonine" evidence="1">
    <location>
        <position position="112"/>
    </location>
</feature>
<feature type="modified residue" description="Phosphoserine" evidence="6 7">
    <location>
        <position position="115"/>
    </location>
</feature>
<feature type="modified residue" description="Phosphoserine" evidence="7">
    <location>
        <position position="119"/>
    </location>
</feature>
<feature type="modified residue" description="Omega-N-methylarginine" evidence="1">
    <location>
        <position position="122"/>
    </location>
</feature>
<feature type="modified residue" description="Phosphoserine" evidence="1">
    <location>
        <position position="145"/>
    </location>
</feature>
<feature type="splice variant" id="VSP_021219" description="In isoform 2." evidence="3">
    <original>S</original>
    <variation>SS</variation>
    <location>
        <position position="154"/>
    </location>
</feature>
<feature type="splice variant" id="VSP_021220" description="In isoform 3." evidence="3">
    <original>CSDILDGSSISSGLSSDSLATGSAPAESPVACSNSCSPFILMDDLSPK</original>
    <variation>WWCYQGEEIPALTRCVEHLQMNE</variation>
    <location>
        <begin position="208"/>
        <end position="255"/>
    </location>
</feature>
<feature type="splice variant" id="VSP_021221" description="In isoform 4." evidence="3">
    <original>CSDILDGSSISSGLSSDSLATGSAPAESPVACSNSCSPFILMDDLSPK</original>
    <variation>WWGSLHGGVSDFE</variation>
    <location>
        <begin position="208"/>
        <end position="255"/>
    </location>
</feature>
<feature type="sequence conflict" description="In Ref. 1; BAC32133." evidence="4" ref="1">
    <original>D</original>
    <variation>G</variation>
    <location>
        <position position="64"/>
    </location>
</feature>
<feature type="sequence conflict" description="In Ref. 3; AAH66167." evidence="4" ref="3">
    <original>D</original>
    <variation>G</variation>
    <location>
        <position position="94"/>
    </location>
</feature>
<keyword id="KW-0007">Acetylation</keyword>
<keyword id="KW-0025">Alternative splicing</keyword>
<keyword id="KW-0488">Methylation</keyword>
<keyword id="KW-0597">Phosphoprotein</keyword>
<keyword id="KW-1185">Reference proteome</keyword>
<reference key="1">
    <citation type="journal article" date="2005" name="Science">
        <title>The transcriptional landscape of the mammalian genome.</title>
        <authorList>
            <person name="Carninci P."/>
            <person name="Kasukawa T."/>
            <person name="Katayama S."/>
            <person name="Gough J."/>
            <person name="Frith M.C."/>
            <person name="Maeda N."/>
            <person name="Oyama R."/>
            <person name="Ravasi T."/>
            <person name="Lenhard B."/>
            <person name="Wells C."/>
            <person name="Kodzius R."/>
            <person name="Shimokawa K."/>
            <person name="Bajic V.B."/>
            <person name="Brenner S.E."/>
            <person name="Batalov S."/>
            <person name="Forrest A.R."/>
            <person name="Zavolan M."/>
            <person name="Davis M.J."/>
            <person name="Wilming L.G."/>
            <person name="Aidinis V."/>
            <person name="Allen J.E."/>
            <person name="Ambesi-Impiombato A."/>
            <person name="Apweiler R."/>
            <person name="Aturaliya R.N."/>
            <person name="Bailey T.L."/>
            <person name="Bansal M."/>
            <person name="Baxter L."/>
            <person name="Beisel K.W."/>
            <person name="Bersano T."/>
            <person name="Bono H."/>
            <person name="Chalk A.M."/>
            <person name="Chiu K.P."/>
            <person name="Choudhary V."/>
            <person name="Christoffels A."/>
            <person name="Clutterbuck D.R."/>
            <person name="Crowe M.L."/>
            <person name="Dalla E."/>
            <person name="Dalrymple B.P."/>
            <person name="de Bono B."/>
            <person name="Della Gatta G."/>
            <person name="di Bernardo D."/>
            <person name="Down T."/>
            <person name="Engstrom P."/>
            <person name="Fagiolini M."/>
            <person name="Faulkner G."/>
            <person name="Fletcher C.F."/>
            <person name="Fukushima T."/>
            <person name="Furuno M."/>
            <person name="Futaki S."/>
            <person name="Gariboldi M."/>
            <person name="Georgii-Hemming P."/>
            <person name="Gingeras T.R."/>
            <person name="Gojobori T."/>
            <person name="Green R.E."/>
            <person name="Gustincich S."/>
            <person name="Harbers M."/>
            <person name="Hayashi Y."/>
            <person name="Hensch T.K."/>
            <person name="Hirokawa N."/>
            <person name="Hill D."/>
            <person name="Huminiecki L."/>
            <person name="Iacono M."/>
            <person name="Ikeo K."/>
            <person name="Iwama A."/>
            <person name="Ishikawa T."/>
            <person name="Jakt M."/>
            <person name="Kanapin A."/>
            <person name="Katoh M."/>
            <person name="Kawasawa Y."/>
            <person name="Kelso J."/>
            <person name="Kitamura H."/>
            <person name="Kitano H."/>
            <person name="Kollias G."/>
            <person name="Krishnan S.P."/>
            <person name="Kruger A."/>
            <person name="Kummerfeld S.K."/>
            <person name="Kurochkin I.V."/>
            <person name="Lareau L.F."/>
            <person name="Lazarevic D."/>
            <person name="Lipovich L."/>
            <person name="Liu J."/>
            <person name="Liuni S."/>
            <person name="McWilliam S."/>
            <person name="Madan Babu M."/>
            <person name="Madera M."/>
            <person name="Marchionni L."/>
            <person name="Matsuda H."/>
            <person name="Matsuzawa S."/>
            <person name="Miki H."/>
            <person name="Mignone F."/>
            <person name="Miyake S."/>
            <person name="Morris K."/>
            <person name="Mottagui-Tabar S."/>
            <person name="Mulder N."/>
            <person name="Nakano N."/>
            <person name="Nakauchi H."/>
            <person name="Ng P."/>
            <person name="Nilsson R."/>
            <person name="Nishiguchi S."/>
            <person name="Nishikawa S."/>
            <person name="Nori F."/>
            <person name="Ohara O."/>
            <person name="Okazaki Y."/>
            <person name="Orlando V."/>
            <person name="Pang K.C."/>
            <person name="Pavan W.J."/>
            <person name="Pavesi G."/>
            <person name="Pesole G."/>
            <person name="Petrovsky N."/>
            <person name="Piazza S."/>
            <person name="Reed J."/>
            <person name="Reid J.F."/>
            <person name="Ring B.Z."/>
            <person name="Ringwald M."/>
            <person name="Rost B."/>
            <person name="Ruan Y."/>
            <person name="Salzberg S.L."/>
            <person name="Sandelin A."/>
            <person name="Schneider C."/>
            <person name="Schoenbach C."/>
            <person name="Sekiguchi K."/>
            <person name="Semple C.A."/>
            <person name="Seno S."/>
            <person name="Sessa L."/>
            <person name="Sheng Y."/>
            <person name="Shibata Y."/>
            <person name="Shimada H."/>
            <person name="Shimada K."/>
            <person name="Silva D."/>
            <person name="Sinclair B."/>
            <person name="Sperling S."/>
            <person name="Stupka E."/>
            <person name="Sugiura K."/>
            <person name="Sultana R."/>
            <person name="Takenaka Y."/>
            <person name="Taki K."/>
            <person name="Tammoja K."/>
            <person name="Tan S.L."/>
            <person name="Tang S."/>
            <person name="Taylor M.S."/>
            <person name="Tegner J."/>
            <person name="Teichmann S.A."/>
            <person name="Ueda H.R."/>
            <person name="van Nimwegen E."/>
            <person name="Verardo R."/>
            <person name="Wei C.L."/>
            <person name="Yagi K."/>
            <person name="Yamanishi H."/>
            <person name="Zabarovsky E."/>
            <person name="Zhu S."/>
            <person name="Zimmer A."/>
            <person name="Hide W."/>
            <person name="Bult C."/>
            <person name="Grimmond S.M."/>
            <person name="Teasdale R.D."/>
            <person name="Liu E.T."/>
            <person name="Brusic V."/>
            <person name="Quackenbush J."/>
            <person name="Wahlestedt C."/>
            <person name="Mattick J.S."/>
            <person name="Hume D.A."/>
            <person name="Kai C."/>
            <person name="Sasaki D."/>
            <person name="Tomaru Y."/>
            <person name="Fukuda S."/>
            <person name="Kanamori-Katayama M."/>
            <person name="Suzuki M."/>
            <person name="Aoki J."/>
            <person name="Arakawa T."/>
            <person name="Iida J."/>
            <person name="Imamura K."/>
            <person name="Itoh M."/>
            <person name="Kato T."/>
            <person name="Kawaji H."/>
            <person name="Kawagashira N."/>
            <person name="Kawashima T."/>
            <person name="Kojima M."/>
            <person name="Kondo S."/>
            <person name="Konno H."/>
            <person name="Nakano K."/>
            <person name="Ninomiya N."/>
            <person name="Nishio T."/>
            <person name="Okada M."/>
            <person name="Plessy C."/>
            <person name="Shibata K."/>
            <person name="Shiraki T."/>
            <person name="Suzuki S."/>
            <person name="Tagami M."/>
            <person name="Waki K."/>
            <person name="Watahiki A."/>
            <person name="Okamura-Oho Y."/>
            <person name="Suzuki H."/>
            <person name="Kawai J."/>
            <person name="Hayashizaki Y."/>
        </authorList>
    </citation>
    <scope>NUCLEOTIDE SEQUENCE [LARGE SCALE MRNA] (ISOFORMS 2; 3 AND 4)</scope>
    <source>
        <strain>C57BL/6J</strain>
        <tissue>Bone</tissue>
        <tissue>Skin</tissue>
    </source>
</reference>
<reference key="2">
    <citation type="journal article" date="2009" name="PLoS Biol.">
        <title>Lineage-specific biology revealed by a finished genome assembly of the mouse.</title>
        <authorList>
            <person name="Church D.M."/>
            <person name="Goodstadt L."/>
            <person name="Hillier L.W."/>
            <person name="Zody M.C."/>
            <person name="Goldstein S."/>
            <person name="She X."/>
            <person name="Bult C.J."/>
            <person name="Agarwala R."/>
            <person name="Cherry J.L."/>
            <person name="DiCuccio M."/>
            <person name="Hlavina W."/>
            <person name="Kapustin Y."/>
            <person name="Meric P."/>
            <person name="Maglott D."/>
            <person name="Birtle Z."/>
            <person name="Marques A.C."/>
            <person name="Graves T."/>
            <person name="Zhou S."/>
            <person name="Teague B."/>
            <person name="Potamousis K."/>
            <person name="Churas C."/>
            <person name="Place M."/>
            <person name="Herschleb J."/>
            <person name="Runnheim R."/>
            <person name="Forrest D."/>
            <person name="Amos-Landgraf J."/>
            <person name="Schwartz D.C."/>
            <person name="Cheng Z."/>
            <person name="Lindblad-Toh K."/>
            <person name="Eichler E.E."/>
            <person name="Ponting C.P."/>
        </authorList>
    </citation>
    <scope>NUCLEOTIDE SEQUENCE [LARGE SCALE GENOMIC DNA]</scope>
    <source>
        <strain>C57BL/6J</strain>
    </source>
</reference>
<reference key="3">
    <citation type="journal article" date="2004" name="Genome Res.">
        <title>The status, quality, and expansion of the NIH full-length cDNA project: the Mammalian Gene Collection (MGC).</title>
        <authorList>
            <consortium name="The MGC Project Team"/>
        </authorList>
    </citation>
    <scope>NUCLEOTIDE SEQUENCE [LARGE SCALE MRNA] (ISOFORM 1)</scope>
    <source>
        <strain>C57BL/6J</strain>
        <tissue>Embryo</tissue>
    </source>
</reference>
<reference key="4">
    <citation type="journal article" date="2007" name="Proc. Natl. Acad. Sci. U.S.A.">
        <title>Large-scale phosphorylation analysis of mouse liver.</title>
        <authorList>
            <person name="Villen J."/>
            <person name="Beausoleil S.A."/>
            <person name="Gerber S.A."/>
            <person name="Gygi S.P."/>
        </authorList>
    </citation>
    <scope>PHOSPHORYLATION [LARGE SCALE ANALYSIS] AT SER-115</scope>
    <scope>IDENTIFICATION BY MASS SPECTROMETRY [LARGE SCALE ANALYSIS]</scope>
    <source>
        <tissue>Liver</tissue>
    </source>
</reference>
<reference key="5">
    <citation type="journal article" date="2010" name="Cell">
        <title>A tissue-specific atlas of mouse protein phosphorylation and expression.</title>
        <authorList>
            <person name="Huttlin E.L."/>
            <person name="Jedrychowski M.P."/>
            <person name="Elias J.E."/>
            <person name="Goswami T."/>
            <person name="Rad R."/>
            <person name="Beausoleil S.A."/>
            <person name="Villen J."/>
            <person name="Haas W."/>
            <person name="Sowa M.E."/>
            <person name="Gygi S.P."/>
        </authorList>
    </citation>
    <scope>PHOSPHORYLATION [LARGE SCALE ANALYSIS] AT SER-58; SER-115 AND SER-119</scope>
    <scope>IDENTIFICATION BY MASS SPECTROMETRY [LARGE SCALE ANALYSIS]</scope>
    <source>
        <tissue>Brain</tissue>
        <tissue>Heart</tissue>
        <tissue>Kidney</tissue>
        <tissue>Liver</tissue>
        <tissue>Lung</tissue>
        <tissue>Spleen</tissue>
        <tissue>Testis</tissue>
    </source>
</reference>
<name>PBIR2_MOUSE</name>
<comment type="alternative products">
    <event type="alternative splicing"/>
    <isoform>
        <id>Q6NZE7-1</id>
        <name>1</name>
        <sequence type="displayed"/>
    </isoform>
    <isoform>
        <id>Q6NZE7-2</id>
        <name>2</name>
        <sequence type="described" ref="VSP_021219"/>
    </isoform>
    <isoform>
        <id>Q6NZE7-3</id>
        <name>3</name>
        <sequence type="described" ref="VSP_021220"/>
    </isoform>
    <isoform>
        <id>Q6NZE7-4</id>
        <name>4</name>
        <sequence type="described" ref="VSP_021221"/>
    </isoform>
</comment>
<comment type="similarity">
    <text evidence="4">Belongs to the FAM122 family.</text>
</comment>
<accession>Q6NZE7</accession>
<accession>B1B0Y4</accession>
<accession>B1B0Y5</accession>
<accession>Q8BRG5</accession>
<accession>Q8CBB0</accession>
<accession>Q9D2N2</accession>
<evidence type="ECO:0000250" key="1">
    <source>
        <dbReference type="UniProtKB" id="Q7Z309"/>
    </source>
</evidence>
<evidence type="ECO:0000256" key="2">
    <source>
        <dbReference type="SAM" id="MobiDB-lite"/>
    </source>
</evidence>
<evidence type="ECO:0000303" key="3">
    <source>
    </source>
</evidence>
<evidence type="ECO:0000305" key="4"/>
<evidence type="ECO:0000312" key="5">
    <source>
        <dbReference type="MGI" id="MGI:1926005"/>
    </source>
</evidence>
<evidence type="ECO:0007744" key="6">
    <source>
    </source>
</evidence>
<evidence type="ECO:0007744" key="7">
    <source>
    </source>
</evidence>
<protein>
    <recommendedName>
        <fullName evidence="1">PABIR family member 2</fullName>
    </recommendedName>
</protein>
<proteinExistence type="evidence at protein level"/>
<dbReference type="EMBL" id="AK019480">
    <property type="protein sequence ID" value="BAB31749.1"/>
    <property type="molecule type" value="mRNA"/>
</dbReference>
<dbReference type="EMBL" id="AK036417">
    <property type="protein sequence ID" value="BAC29421.1"/>
    <property type="molecule type" value="mRNA"/>
</dbReference>
<dbReference type="EMBL" id="AK044896">
    <property type="protein sequence ID" value="BAC32133.1"/>
    <property type="molecule type" value="mRNA"/>
</dbReference>
<dbReference type="EMBL" id="BX679674">
    <property type="status" value="NOT_ANNOTATED_CDS"/>
    <property type="molecule type" value="Genomic_DNA"/>
</dbReference>
<dbReference type="EMBL" id="BC066167">
    <property type="protein sequence ID" value="AAH66167.1"/>
    <property type="molecule type" value="mRNA"/>
</dbReference>
<dbReference type="CCDS" id="CCDS30129.1">
    <molecule id="Q6NZE7-2"/>
</dbReference>
<dbReference type="CCDS" id="CCDS53069.1">
    <molecule id="Q6NZE7-3"/>
</dbReference>
<dbReference type="CCDS" id="CCDS53070.1">
    <molecule id="Q6NZE7-1"/>
</dbReference>
<dbReference type="RefSeq" id="NP_001159837.2">
    <molecule id="Q6NZE7-1"/>
    <property type="nucleotide sequence ID" value="NM_001166365.2"/>
</dbReference>
<dbReference type="RefSeq" id="NP_001160055.1">
    <molecule id="Q6NZE7-3"/>
    <property type="nucleotide sequence ID" value="NM_001166583.1"/>
</dbReference>
<dbReference type="RefSeq" id="NP_084443.1">
    <molecule id="Q6NZE7-2"/>
    <property type="nucleotide sequence ID" value="NM_030167.4"/>
</dbReference>
<dbReference type="SMR" id="Q6NZE7"/>
<dbReference type="FunCoup" id="Q6NZE7">
    <property type="interactions" value="101"/>
</dbReference>
<dbReference type="STRING" id="10090.ENSMUSP00000069112"/>
<dbReference type="GlyGen" id="Q6NZE7">
    <property type="glycosylation" value="1 site"/>
</dbReference>
<dbReference type="iPTMnet" id="Q6NZE7"/>
<dbReference type="PhosphoSitePlus" id="Q6NZE7"/>
<dbReference type="jPOST" id="Q6NZE7"/>
<dbReference type="PaxDb" id="10090-ENSMUSP00000110487"/>
<dbReference type="ProteomicsDB" id="271512">
    <molecule id="Q6NZE7-1"/>
</dbReference>
<dbReference type="ProteomicsDB" id="271513">
    <molecule id="Q6NZE7-2"/>
</dbReference>
<dbReference type="ProteomicsDB" id="271514">
    <molecule id="Q6NZE7-3"/>
</dbReference>
<dbReference type="ProteomicsDB" id="271515">
    <molecule id="Q6NZE7-4"/>
</dbReference>
<dbReference type="Antibodypedia" id="425">
    <property type="antibodies" value="56 antibodies from 15 providers"/>
</dbReference>
<dbReference type="DNASU" id="78755"/>
<dbReference type="Ensembl" id="ENSMUST00000071023.12">
    <molecule id="Q6NZE7-2"/>
    <property type="protein sequence ID" value="ENSMUSP00000069112.6"/>
    <property type="gene ID" value="ENSMUSG00000036022.16"/>
</dbReference>
<dbReference type="Ensembl" id="ENSMUST00000114838.8">
    <molecule id="Q6NZE7-1"/>
    <property type="protein sequence ID" value="ENSMUSP00000110487.2"/>
    <property type="gene ID" value="ENSMUSG00000036022.16"/>
</dbReference>
<dbReference type="Ensembl" id="ENSMUST00000114841.2">
    <molecule id="Q6NZE7-3"/>
    <property type="protein sequence ID" value="ENSMUSP00000110490.2"/>
    <property type="gene ID" value="ENSMUSG00000036022.16"/>
</dbReference>
<dbReference type="GeneID" id="78755"/>
<dbReference type="KEGG" id="mmu:78755"/>
<dbReference type="UCSC" id="uc009tev.2">
    <molecule id="Q6NZE7-2"/>
    <property type="organism name" value="mouse"/>
</dbReference>
<dbReference type="UCSC" id="uc009tew.2">
    <molecule id="Q6NZE7-1"/>
    <property type="organism name" value="mouse"/>
</dbReference>
<dbReference type="UCSC" id="uc009tex.2">
    <molecule id="Q6NZE7-4"/>
    <property type="organism name" value="mouse"/>
</dbReference>
<dbReference type="UCSC" id="uc009tey.2">
    <molecule id="Q6NZE7-3"/>
    <property type="organism name" value="mouse"/>
</dbReference>
<dbReference type="AGR" id="MGI:1926005"/>
<dbReference type="CTD" id="159090"/>
<dbReference type="MGI" id="MGI:1926005">
    <property type="gene designation" value="Pabir2"/>
</dbReference>
<dbReference type="VEuPathDB" id="HostDB:ENSMUSG00000036022"/>
<dbReference type="eggNOG" id="ENOG502QTCH">
    <property type="taxonomic scope" value="Eukaryota"/>
</dbReference>
<dbReference type="GeneTree" id="ENSGT00390000015476"/>
<dbReference type="HOGENOM" id="CLU_083344_0_0_1"/>
<dbReference type="InParanoid" id="Q6NZE7"/>
<dbReference type="OMA" id="MDVDCPI"/>
<dbReference type="OrthoDB" id="77166at9989"/>
<dbReference type="PhylomeDB" id="Q6NZE7"/>
<dbReference type="TreeFam" id="TF330808"/>
<dbReference type="BioGRID-ORCS" id="78755">
    <property type="hits" value="0 hits in 77 CRISPR screens"/>
</dbReference>
<dbReference type="ChiTaRS" id="Fam122b">
    <property type="organism name" value="mouse"/>
</dbReference>
<dbReference type="PRO" id="PR:Q6NZE7"/>
<dbReference type="Proteomes" id="UP000000589">
    <property type="component" value="Chromosome X"/>
</dbReference>
<dbReference type="RNAct" id="Q6NZE7">
    <property type="molecule type" value="protein"/>
</dbReference>
<dbReference type="Bgee" id="ENSMUSG00000036022">
    <property type="expression patterns" value="Expressed in superior cervical ganglion and 197 other cell types or tissues"/>
</dbReference>
<dbReference type="ExpressionAtlas" id="Q6NZE7">
    <property type="expression patterns" value="baseline and differential"/>
</dbReference>
<dbReference type="GO" id="GO:0004865">
    <property type="term" value="F:protein serine/threonine phosphatase inhibitor activity"/>
    <property type="evidence" value="ECO:0007669"/>
    <property type="project" value="InterPro"/>
</dbReference>
<dbReference type="InterPro" id="IPR026716">
    <property type="entry name" value="PBIR1/2/3"/>
</dbReference>
<dbReference type="PANTHER" id="PTHR22227">
    <property type="entry name" value="FAMILY WITH SEQUENCE SIMILARITY 122B ISOFORM X1"/>
    <property type="match status" value="1"/>
</dbReference>
<dbReference type="PANTHER" id="PTHR22227:SF1">
    <property type="entry name" value="PABIR FAMILY MEMBER 2"/>
    <property type="match status" value="1"/>
</dbReference>